<comment type="function">
    <text evidence="1 2">May be a heme chaperone, appears to bind heme. Homologous bacterial proteins do not have oxygen-independent coproporphyrinogen-III oxidase activity (By similarity). Binds 1 [4Fe-4S] cluster. The cluster is coordinated with 3 cysteines and an exchangeable S-adenosyl-L-methionine (By similarity).</text>
</comment>
<comment type="cofactor">
    <cofactor evidence="4">
        <name>[4Fe-4S] cluster</name>
        <dbReference type="ChEBI" id="CHEBI:49883"/>
    </cofactor>
</comment>
<comment type="subcellular location">
    <subcellularLocation>
        <location evidence="6">Mitochondrion</location>
    </subcellularLocation>
</comment>
<comment type="miscellaneous">
    <text evidence="1">Might carry two S-adenosyl-L-methionine binding sites with only one binding to the iron-sulfur cluster.</text>
</comment>
<comment type="similarity">
    <text evidence="6">Belongs to the anaerobic coproporphyrinogen-III oxidase family. HemW subfamily.</text>
</comment>
<feature type="transit peptide" description="Mitochondrion" evidence="3">
    <location>
        <begin position="1"/>
        <end position="22"/>
    </location>
</feature>
<feature type="chain" id="PRO_0000330865" description="Radical S-adenosyl methionine domain-containing protein 1, mitochondrial">
    <location>
        <begin position="23"/>
        <end position="442"/>
    </location>
</feature>
<feature type="domain" description="Radical SAM core" evidence="4">
    <location>
        <begin position="34"/>
        <end position="270"/>
    </location>
</feature>
<feature type="region of interest" description="Disordered" evidence="5">
    <location>
        <begin position="1"/>
        <end position="37"/>
    </location>
</feature>
<feature type="binding site" evidence="1">
    <location>
        <position position="43"/>
    </location>
    <ligand>
        <name>S-adenosyl-L-methionine</name>
        <dbReference type="ChEBI" id="CHEBI:59789"/>
        <label>1</label>
    </ligand>
</feature>
<feature type="binding site" evidence="1">
    <location>
        <position position="49"/>
    </location>
    <ligand>
        <name>[4Fe-4S] cluster</name>
        <dbReference type="ChEBI" id="CHEBI:49883"/>
        <note>4Fe-4S-S-AdoMet</note>
    </ligand>
</feature>
<feature type="binding site" evidence="1">
    <location>
        <position position="53"/>
    </location>
    <ligand>
        <name>[4Fe-4S] cluster</name>
        <dbReference type="ChEBI" id="CHEBI:49883"/>
        <note>4Fe-4S-S-AdoMet</note>
    </ligand>
</feature>
<feature type="binding site" evidence="1">
    <location>
        <position position="56"/>
    </location>
    <ligand>
        <name>[4Fe-4S] cluster</name>
        <dbReference type="ChEBI" id="CHEBI:49883"/>
        <note>4Fe-4S-S-AdoMet</note>
    </ligand>
</feature>
<feature type="binding site" evidence="1">
    <location>
        <position position="98"/>
    </location>
    <ligand>
        <name>S-adenosyl-L-methionine</name>
        <dbReference type="ChEBI" id="CHEBI:59789"/>
        <label>1</label>
    </ligand>
</feature>
<feature type="binding site" evidence="1">
    <location>
        <begin position="99"/>
        <end position="100"/>
    </location>
    <ligand>
        <name>S-adenosyl-L-methionine</name>
        <dbReference type="ChEBI" id="CHEBI:59789"/>
        <label>2</label>
    </ligand>
</feature>
<feature type="binding site" evidence="1">
    <location>
        <position position="131"/>
    </location>
    <ligand>
        <name>S-adenosyl-L-methionine</name>
        <dbReference type="ChEBI" id="CHEBI:59789"/>
        <label>1</label>
    </ligand>
</feature>
<feature type="binding site" evidence="1">
    <location>
        <position position="158"/>
    </location>
    <ligand>
        <name>S-adenosyl-L-methionine</name>
        <dbReference type="ChEBI" id="CHEBI:59789"/>
        <label>2</label>
    </ligand>
</feature>
<feature type="binding site" evidence="1">
    <location>
        <position position="170"/>
    </location>
    <ligand>
        <name>S-adenosyl-L-methionine</name>
        <dbReference type="ChEBI" id="CHEBI:59789"/>
        <label>2</label>
    </ligand>
</feature>
<feature type="binding site" evidence="1">
    <location>
        <position position="195"/>
    </location>
    <ligand>
        <name>S-adenosyl-L-methionine</name>
        <dbReference type="ChEBI" id="CHEBI:59789"/>
        <label>2</label>
    </ligand>
</feature>
<evidence type="ECO:0000250" key="1">
    <source>
        <dbReference type="UniProtKB" id="P32131"/>
    </source>
</evidence>
<evidence type="ECO:0000250" key="2">
    <source>
        <dbReference type="UniProtKB" id="Q9HA92"/>
    </source>
</evidence>
<evidence type="ECO:0000255" key="3"/>
<evidence type="ECO:0000255" key="4">
    <source>
        <dbReference type="PROSITE-ProRule" id="PRU01266"/>
    </source>
</evidence>
<evidence type="ECO:0000256" key="5">
    <source>
        <dbReference type="SAM" id="MobiDB-lite"/>
    </source>
</evidence>
<evidence type="ECO:0000305" key="6"/>
<accession>A5D7B1</accession>
<dbReference type="EMBL" id="BC140491">
    <property type="protein sequence ID" value="AAI40492.1"/>
    <property type="molecule type" value="mRNA"/>
</dbReference>
<dbReference type="RefSeq" id="NP_001091605.1">
    <property type="nucleotide sequence ID" value="NM_001098136.1"/>
</dbReference>
<dbReference type="SMR" id="A5D7B1"/>
<dbReference type="FunCoup" id="A5D7B1">
    <property type="interactions" value="106"/>
</dbReference>
<dbReference type="STRING" id="9913.ENSBTAP00000071473"/>
<dbReference type="PaxDb" id="9913-ENSBTAP00000028387"/>
<dbReference type="GeneID" id="615755"/>
<dbReference type="KEGG" id="bta:615755"/>
<dbReference type="CTD" id="55316"/>
<dbReference type="eggNOG" id="ENOG502QRH0">
    <property type="taxonomic scope" value="Eukaryota"/>
</dbReference>
<dbReference type="InParanoid" id="A5D7B1"/>
<dbReference type="OrthoDB" id="431409at2759"/>
<dbReference type="Proteomes" id="UP000009136">
    <property type="component" value="Unplaced"/>
</dbReference>
<dbReference type="GO" id="GO:0005737">
    <property type="term" value="C:cytoplasm"/>
    <property type="evidence" value="ECO:0000318"/>
    <property type="project" value="GO_Central"/>
</dbReference>
<dbReference type="GO" id="GO:0005739">
    <property type="term" value="C:mitochondrion"/>
    <property type="evidence" value="ECO:0007669"/>
    <property type="project" value="UniProtKB-SubCell"/>
</dbReference>
<dbReference type="GO" id="GO:0051539">
    <property type="term" value="F:4 iron, 4 sulfur cluster binding"/>
    <property type="evidence" value="ECO:0000318"/>
    <property type="project" value="GO_Central"/>
</dbReference>
<dbReference type="GO" id="GO:0004109">
    <property type="term" value="F:coproporphyrinogen oxidase activity"/>
    <property type="evidence" value="ECO:0007669"/>
    <property type="project" value="InterPro"/>
</dbReference>
<dbReference type="GO" id="GO:0046872">
    <property type="term" value="F:metal ion binding"/>
    <property type="evidence" value="ECO:0007669"/>
    <property type="project" value="UniProtKB-KW"/>
</dbReference>
<dbReference type="GO" id="GO:0006779">
    <property type="term" value="P:porphyrin-containing compound biosynthetic process"/>
    <property type="evidence" value="ECO:0000318"/>
    <property type="project" value="GO_Central"/>
</dbReference>
<dbReference type="CDD" id="cd01335">
    <property type="entry name" value="Radical_SAM"/>
    <property type="match status" value="1"/>
</dbReference>
<dbReference type="Gene3D" id="3.20.20.70">
    <property type="entry name" value="Aldolase class I"/>
    <property type="match status" value="1"/>
</dbReference>
<dbReference type="InterPro" id="IPR013785">
    <property type="entry name" value="Aldolase_TIM"/>
</dbReference>
<dbReference type="InterPro" id="IPR034505">
    <property type="entry name" value="Coproporphyrinogen-III_oxidase"/>
</dbReference>
<dbReference type="InterPro" id="IPR006638">
    <property type="entry name" value="Elp3/MiaA/NifB-like_rSAM"/>
</dbReference>
<dbReference type="InterPro" id="IPR010723">
    <property type="entry name" value="HemN_C"/>
</dbReference>
<dbReference type="InterPro" id="IPR004559">
    <property type="entry name" value="HemW-like"/>
</dbReference>
<dbReference type="InterPro" id="IPR007197">
    <property type="entry name" value="rSAM"/>
</dbReference>
<dbReference type="NCBIfam" id="TIGR00539">
    <property type="entry name" value="hemN_rel"/>
    <property type="match status" value="1"/>
</dbReference>
<dbReference type="PANTHER" id="PTHR13932">
    <property type="entry name" value="COPROPORPHYRINIGEN III OXIDASE"/>
    <property type="match status" value="1"/>
</dbReference>
<dbReference type="PANTHER" id="PTHR13932:SF5">
    <property type="entry name" value="RADICAL S-ADENOSYL METHIONINE DOMAIN-CONTAINING PROTEIN 1, MITOCHONDRIAL"/>
    <property type="match status" value="1"/>
</dbReference>
<dbReference type="Pfam" id="PF06969">
    <property type="entry name" value="HemN_C"/>
    <property type="match status" value="1"/>
</dbReference>
<dbReference type="Pfam" id="PF04055">
    <property type="entry name" value="Radical_SAM"/>
    <property type="match status" value="1"/>
</dbReference>
<dbReference type="SFLD" id="SFLDF00562">
    <property type="entry name" value="HemN-like__clustered_with_heat"/>
    <property type="match status" value="1"/>
</dbReference>
<dbReference type="SFLD" id="SFLDF00288">
    <property type="entry name" value="HemN-like__clustered_with_nucl"/>
    <property type="match status" value="1"/>
</dbReference>
<dbReference type="SFLD" id="SFLDS00029">
    <property type="entry name" value="Radical_SAM"/>
    <property type="match status" value="1"/>
</dbReference>
<dbReference type="SMART" id="SM00729">
    <property type="entry name" value="Elp3"/>
    <property type="match status" value="1"/>
</dbReference>
<dbReference type="SUPFAM" id="SSF102114">
    <property type="entry name" value="Radical SAM enzymes"/>
    <property type="match status" value="1"/>
</dbReference>
<dbReference type="PROSITE" id="PS51918">
    <property type="entry name" value="RADICAL_SAM"/>
    <property type="match status" value="1"/>
</dbReference>
<keyword id="KW-0004">4Fe-4S</keyword>
<keyword id="KW-0143">Chaperone</keyword>
<keyword id="KW-0349">Heme</keyword>
<keyword id="KW-0408">Iron</keyword>
<keyword id="KW-0411">Iron-sulfur</keyword>
<keyword id="KW-0479">Metal-binding</keyword>
<keyword id="KW-0496">Mitochondrion</keyword>
<keyword id="KW-1185">Reference proteome</keyword>
<keyword id="KW-0949">S-adenosyl-L-methionine</keyword>
<keyword id="KW-0809">Transit peptide</keyword>
<name>RSAD1_BOVIN</name>
<proteinExistence type="evidence at transcript level"/>
<protein>
    <recommendedName>
        <fullName>Radical S-adenosyl methionine domain-containing protein 1, mitochondrial</fullName>
    </recommendedName>
    <alternativeName>
        <fullName>Putative heme chaperone</fullName>
    </alternativeName>
</protein>
<reference key="1">
    <citation type="submission" date="2007-04" db="EMBL/GenBank/DDBJ databases">
        <authorList>
            <consortium name="NIH - Mammalian Gene Collection (MGC) project"/>
        </authorList>
    </citation>
    <scope>NUCLEOTIDE SEQUENCE [LARGE SCALE MRNA]</scope>
    <source>
        <strain>Hereford</strain>
        <tissue>Ascending colon</tissue>
    </source>
</reference>
<organism>
    <name type="scientific">Bos taurus</name>
    <name type="common">Bovine</name>
    <dbReference type="NCBI Taxonomy" id="9913"/>
    <lineage>
        <taxon>Eukaryota</taxon>
        <taxon>Metazoa</taxon>
        <taxon>Chordata</taxon>
        <taxon>Craniata</taxon>
        <taxon>Vertebrata</taxon>
        <taxon>Euteleostomi</taxon>
        <taxon>Mammalia</taxon>
        <taxon>Eutheria</taxon>
        <taxon>Laurasiatheria</taxon>
        <taxon>Artiodactyla</taxon>
        <taxon>Ruminantia</taxon>
        <taxon>Pecora</taxon>
        <taxon>Bovidae</taxon>
        <taxon>Bovinae</taxon>
        <taxon>Bos</taxon>
    </lineage>
</organism>
<sequence>MALPRSQARGWVKAAKMAQRRRPADDTGGPQSPAPGSQRAALYVHWPYCEKRCSYCNFNKYIPRGVDEAALRRCLVIEAQTLLRLSGVRRVESVFFGGGTPSLASPHTVAAVLEAVAQAAHLPADSEVTLEANPTSASGSRLAAFGAAGVNRLSIGLQSLDDTELQLLGRTHSARDALQTLAEAQRLFPGRVSVDLMLGLPAQQVGPWLRQLQGLLRCCDDHVSLYQLSLERGTTLFTQVQQGALPAPDPELAAEMYQEGRAVLREAGFRQYEVSNFARNGALSTHNWTYWQCGQYLGVGPGAHGRFIPQGAGGHTREARIQTLEPDSWMKEVMLFGHGTRRRVPLSELELLEEVLAMGLRTDVGITHQHWQQFEPQLTLWDLFGASKEVKELQEQGLLLLDHRGLRCSWEGLAVLDSLLLSLLSRLQEAWQQRTPSSVPRG</sequence>
<gene>
    <name type="primary">RSAD1</name>
</gene>